<proteinExistence type="inferred from homology"/>
<accession>O98370</accession>
<protein>
    <recommendedName>
        <fullName evidence="1">Maturase K</fullName>
    </recommendedName>
    <alternativeName>
        <fullName evidence="1">Intron maturase</fullName>
    </alternativeName>
</protein>
<gene>
    <name evidence="1" type="primary">matK</name>
</gene>
<comment type="function">
    <text evidence="1">Usually encoded in the trnK tRNA gene intron. Probably assists in splicing its own and other chloroplast group II introns.</text>
</comment>
<comment type="subcellular location">
    <subcellularLocation>
        <location>Plastid</location>
        <location>Chloroplast</location>
    </subcellularLocation>
</comment>
<comment type="similarity">
    <text evidence="1">Belongs to the intron maturase 2 family. MatK subfamily.</text>
</comment>
<geneLocation type="chloroplast"/>
<dbReference type="EMBL" id="AF015650">
    <property type="protein sequence ID" value="AAD10955.1"/>
    <property type="molecule type" value="Genomic_DNA"/>
</dbReference>
<dbReference type="EMBL" id="AF133221">
    <property type="protein sequence ID" value="AAG23349.1"/>
    <property type="molecule type" value="Genomic_DNA"/>
</dbReference>
<dbReference type="RefSeq" id="YP_008963672.1">
    <property type="nucleotide sequence ID" value="NC_023092.1"/>
</dbReference>
<dbReference type="GeneID" id="17961140"/>
<dbReference type="GO" id="GO:0009507">
    <property type="term" value="C:chloroplast"/>
    <property type="evidence" value="ECO:0007669"/>
    <property type="project" value="UniProtKB-SubCell"/>
</dbReference>
<dbReference type="GO" id="GO:0003723">
    <property type="term" value="F:RNA binding"/>
    <property type="evidence" value="ECO:0007669"/>
    <property type="project" value="UniProtKB-KW"/>
</dbReference>
<dbReference type="GO" id="GO:0006397">
    <property type="term" value="P:mRNA processing"/>
    <property type="evidence" value="ECO:0007669"/>
    <property type="project" value="UniProtKB-KW"/>
</dbReference>
<dbReference type="GO" id="GO:0008380">
    <property type="term" value="P:RNA splicing"/>
    <property type="evidence" value="ECO:0007669"/>
    <property type="project" value="UniProtKB-UniRule"/>
</dbReference>
<dbReference type="GO" id="GO:0008033">
    <property type="term" value="P:tRNA processing"/>
    <property type="evidence" value="ECO:0007669"/>
    <property type="project" value="UniProtKB-KW"/>
</dbReference>
<dbReference type="HAMAP" id="MF_01390">
    <property type="entry name" value="MatK"/>
    <property type="match status" value="1"/>
</dbReference>
<dbReference type="InterPro" id="IPR024937">
    <property type="entry name" value="Domain_X"/>
</dbReference>
<dbReference type="InterPro" id="IPR002866">
    <property type="entry name" value="Maturase_MatK"/>
</dbReference>
<dbReference type="InterPro" id="IPR024942">
    <property type="entry name" value="Maturase_MatK_N"/>
</dbReference>
<dbReference type="PANTHER" id="PTHR34811">
    <property type="entry name" value="MATURASE K"/>
    <property type="match status" value="1"/>
</dbReference>
<dbReference type="PANTHER" id="PTHR34811:SF1">
    <property type="entry name" value="MATURASE K"/>
    <property type="match status" value="1"/>
</dbReference>
<dbReference type="Pfam" id="PF01348">
    <property type="entry name" value="Intron_maturas2"/>
    <property type="match status" value="1"/>
</dbReference>
<dbReference type="Pfam" id="PF01824">
    <property type="entry name" value="MatK_N"/>
    <property type="match status" value="1"/>
</dbReference>
<name>MATK_LIQFO</name>
<feature type="chain" id="PRO_0000143483" description="Maturase K">
    <location>
        <begin position="1"/>
        <end position="503"/>
    </location>
</feature>
<organism>
    <name type="scientific">Liquidambar formosana</name>
    <name type="common">Formosan gum</name>
    <dbReference type="NCBI Taxonomy" id="63359"/>
    <lineage>
        <taxon>Eukaryota</taxon>
        <taxon>Viridiplantae</taxon>
        <taxon>Streptophyta</taxon>
        <taxon>Embryophyta</taxon>
        <taxon>Tracheophyta</taxon>
        <taxon>Spermatophyta</taxon>
        <taxon>Magnoliopsida</taxon>
        <taxon>eudicotyledons</taxon>
        <taxon>Gunneridae</taxon>
        <taxon>Pentapetalae</taxon>
        <taxon>Saxifragales</taxon>
        <taxon>Altingiaceae</taxon>
        <taxon>Liquidambar</taxon>
    </lineage>
</organism>
<sequence length="503" mass="59125">MEESQGYLELDKSRQHDFLYPLIFQEYIYVLAHDHGLNRSILLENLGSDNKFSSLIVKRLITRMYQQNRLIISANDSNQNPFLGHNKDLYSQMISEGFAVIVEIPFPLRLVSSLERKEIVKSHNLRSIHSVFPFLEDKFLHLNYVSDILIPHPIHLEILVQTLRYWVKDASSLHLLRFFLYEYRNWNSLINPKKSIFVFSKRNQRLFLFLYNSHVYEYESVFVFLRNQSSHLRSTSSGALLERIYFYGKIKHLVEAFANDFQASPWLFKDPFVHYVRYQGKSILASKGTPLLMNKWKYYLVNFWQCHFYVWSQPVRIYINQLSNHSFYFLGYLSSVGLNPSVVRNQMLENSFIIDNAIKKFDIIVPIIPLIGSLAKAKFCNVLGHPISKPARADSSDSDIIDRFVRICRNLSHYHSGSSKKKSLYRIKYILRLSCARTLARKHKSPVRAFLKRLGSELLEEFLTEEEQVLSLIVPASSTSRRLYRGRIWYLDIICINDLANHE</sequence>
<keyword id="KW-0150">Chloroplast</keyword>
<keyword id="KW-0507">mRNA processing</keyword>
<keyword id="KW-0934">Plastid</keyword>
<keyword id="KW-0694">RNA-binding</keyword>
<keyword id="KW-0819">tRNA processing</keyword>
<reference key="1">
    <citation type="submission" date="1997-02" db="EMBL/GenBank/DDBJ databases">
        <title>Interspecific relationships and molecular divergence of Hamamelis and Liquidambar (Hamamelidaceae).</title>
        <authorList>
            <person name="Li J.-H."/>
            <person name="Bogle A.L."/>
            <person name="Klein A.S."/>
        </authorList>
    </citation>
    <scope>NUCLEOTIDE SEQUENCE [GENOMIC DNA]</scope>
</reference>
<reference key="2">
    <citation type="submission" date="1999-03" db="EMBL/GenBank/DDBJ databases">
        <title>Phylogenetic inference in Altingioideae (Hamamelidaceae) based on matK and its sequences.</title>
        <authorList>
            <person name="Shi S."/>
            <person name="Huang Y."/>
            <person name="Zhang Q."/>
            <person name="Parks C.R."/>
            <person name="Wen J."/>
        </authorList>
    </citation>
    <scope>NUCLEOTIDE SEQUENCE [GENOMIC DNA]</scope>
</reference>
<evidence type="ECO:0000255" key="1">
    <source>
        <dbReference type="HAMAP-Rule" id="MF_01390"/>
    </source>
</evidence>